<feature type="chain" id="PRO_0000316585" description="O-glycoside alpha-1,2-mannosyltransferase homolog 3">
    <location>
        <begin position="1"/>
        <end position="378"/>
    </location>
</feature>
<feature type="topological domain" description="Cytoplasmic" evidence="2">
    <location>
        <begin position="1"/>
        <end position="6"/>
    </location>
</feature>
<feature type="transmembrane region" description="Helical; Signal-anchor for type II membrane protein" evidence="2">
    <location>
        <begin position="7"/>
        <end position="24"/>
    </location>
</feature>
<feature type="topological domain" description="Lumenal" evidence="2">
    <location>
        <begin position="25"/>
        <end position="378"/>
    </location>
</feature>
<feature type="active site" description="Nucleophile" evidence="2">
    <location>
        <position position="276"/>
    </location>
</feature>
<name>OMH3_SCHPO</name>
<protein>
    <recommendedName>
        <fullName>O-glycoside alpha-1,2-mannosyltransferase homolog 3</fullName>
        <ecNumber>2.4.1.-</ecNumber>
    </recommendedName>
</protein>
<gene>
    <name type="primary">omh3</name>
    <name type="ORF">SPCC777.07</name>
</gene>
<proteinExistence type="inferred from homology"/>
<sequence>MGIPKSSIYFCILLFCIISFYLQSSKDGPKELKVKYVFLKKATAKQRGESSLTDSDYFPKQPNMNATLFMLCRNRDIKDALVSIQSVEDRFNHRYHYPWTFMNDAPFTKEFITATSKMVSGDATYVQLNNEEWGIPINIDLNRMLKSIRDMTDDKVIYGFSLSYRIMCRFNSGFFYRNKALSHYDYYWRVEPGVEYSCDIPYDPFRKLSDENKAYGFVISMTDYYETLPSLWNVTRDFIHQNPQYLAQNNSLDFIVNDHQGLSGDYNLCHFWSNFEIANLNFFRSPAYTDYFAHLDKNYGFFYERWGDAPVHSLAASLFLNKSQIHYFEDFGYYHLPWYHCPTDVQSHATARCLCDPTGTIDYLPFSCAIKWLENINS</sequence>
<comment type="function">
    <text evidence="1">Probable mannosyltransferase involved in O-glycosylation of cell wall and secreted proteins.</text>
</comment>
<comment type="subcellular location">
    <subcellularLocation>
        <location evidence="3">Endoplasmic reticulum membrane</location>
        <topology evidence="3">Single-pass type II membrane protein</topology>
    </subcellularLocation>
    <subcellularLocation>
        <location evidence="3">Golgi apparatus membrane</location>
        <topology evidence="3">Single-pass type II membrane protein</topology>
    </subcellularLocation>
</comment>
<comment type="similarity">
    <text evidence="4">Belongs to the glycosyltransferase 15 family.</text>
</comment>
<dbReference type="EC" id="2.4.1.-"/>
<dbReference type="EMBL" id="CU329672">
    <property type="protein sequence ID" value="CAA20711.1"/>
    <property type="molecule type" value="Genomic_DNA"/>
</dbReference>
<dbReference type="PIR" id="T11713">
    <property type="entry name" value="T11713"/>
</dbReference>
<dbReference type="RefSeq" id="NP_588253.1">
    <property type="nucleotide sequence ID" value="NM_001023243.2"/>
</dbReference>
<dbReference type="SMR" id="O74546"/>
<dbReference type="BioGRID" id="276149">
    <property type="interactions" value="4"/>
</dbReference>
<dbReference type="FunCoup" id="O74546">
    <property type="interactions" value="120"/>
</dbReference>
<dbReference type="STRING" id="284812.O74546"/>
<dbReference type="CAZy" id="GT15">
    <property type="family name" value="Glycosyltransferase Family 15"/>
</dbReference>
<dbReference type="PaxDb" id="4896-SPCC777.07.1"/>
<dbReference type="EnsemblFungi" id="SPCC777.07.1">
    <property type="protein sequence ID" value="SPCC777.07.1:pep"/>
    <property type="gene ID" value="SPCC777.07"/>
</dbReference>
<dbReference type="PomBase" id="SPCC777.07">
    <property type="gene designation" value="omh3"/>
</dbReference>
<dbReference type="VEuPathDB" id="FungiDB:SPCC777.07"/>
<dbReference type="eggNOG" id="KOG4472">
    <property type="taxonomic scope" value="Eukaryota"/>
</dbReference>
<dbReference type="HOGENOM" id="CLU_024327_4_2_1"/>
<dbReference type="InParanoid" id="O74546"/>
<dbReference type="OMA" id="DWYFRVE"/>
<dbReference type="PhylomeDB" id="O74546"/>
<dbReference type="PRO" id="PR:O74546"/>
<dbReference type="Proteomes" id="UP000002485">
    <property type="component" value="Chromosome III"/>
</dbReference>
<dbReference type="GO" id="GO:0005783">
    <property type="term" value="C:endoplasmic reticulum"/>
    <property type="evidence" value="ECO:0007005"/>
    <property type="project" value="PomBase"/>
</dbReference>
<dbReference type="GO" id="GO:0005789">
    <property type="term" value="C:endoplasmic reticulum membrane"/>
    <property type="evidence" value="ECO:0007669"/>
    <property type="project" value="UniProtKB-SubCell"/>
</dbReference>
<dbReference type="GO" id="GO:0005794">
    <property type="term" value="C:Golgi apparatus"/>
    <property type="evidence" value="ECO:0000318"/>
    <property type="project" value="GO_Central"/>
</dbReference>
<dbReference type="GO" id="GO:0000139">
    <property type="term" value="C:Golgi membrane"/>
    <property type="evidence" value="ECO:0000250"/>
    <property type="project" value="PomBase"/>
</dbReference>
<dbReference type="GO" id="GO:0000026">
    <property type="term" value="F:alpha-1,2-mannosyltransferase activity"/>
    <property type="evidence" value="ECO:0000318"/>
    <property type="project" value="GO_Central"/>
</dbReference>
<dbReference type="GO" id="GO:0000032">
    <property type="term" value="P:cell wall mannoprotein biosynthetic process"/>
    <property type="evidence" value="ECO:0000318"/>
    <property type="project" value="GO_Central"/>
</dbReference>
<dbReference type="GO" id="GO:0006487">
    <property type="term" value="P:protein N-linked glycosylation"/>
    <property type="evidence" value="ECO:0000318"/>
    <property type="project" value="GO_Central"/>
</dbReference>
<dbReference type="GO" id="GO:0006493">
    <property type="term" value="P:protein O-linked glycosylation"/>
    <property type="evidence" value="ECO:0000318"/>
    <property type="project" value="GO_Central"/>
</dbReference>
<dbReference type="FunFam" id="3.90.550.10:FF:000051">
    <property type="entry name" value="Alpha-1,2-mannosyltransferase (Ktr4)"/>
    <property type="match status" value="1"/>
</dbReference>
<dbReference type="Gene3D" id="3.90.550.10">
    <property type="entry name" value="Spore Coat Polysaccharide Biosynthesis Protein SpsA, Chain A"/>
    <property type="match status" value="1"/>
</dbReference>
<dbReference type="InterPro" id="IPR002685">
    <property type="entry name" value="Glyco_trans_15"/>
</dbReference>
<dbReference type="InterPro" id="IPR029044">
    <property type="entry name" value="Nucleotide-diphossugar_trans"/>
</dbReference>
<dbReference type="PANTHER" id="PTHR31121">
    <property type="entry name" value="ALPHA-1,2 MANNOSYLTRANSFERASE KTR1"/>
    <property type="match status" value="1"/>
</dbReference>
<dbReference type="PANTHER" id="PTHR31121:SF15">
    <property type="entry name" value="O-GLYCOSIDE ALPHA-1,2-MANNOSYLTRANSFERASE HOMOLOG 3"/>
    <property type="match status" value="1"/>
</dbReference>
<dbReference type="Pfam" id="PF01793">
    <property type="entry name" value="Glyco_transf_15"/>
    <property type="match status" value="1"/>
</dbReference>
<dbReference type="PIRSF" id="PIRSF018153">
    <property type="entry name" value="Glyco_trans_15"/>
    <property type="match status" value="1"/>
</dbReference>
<dbReference type="SUPFAM" id="SSF53448">
    <property type="entry name" value="Nucleotide-diphospho-sugar transferases"/>
    <property type="match status" value="1"/>
</dbReference>
<keyword id="KW-0256">Endoplasmic reticulum</keyword>
<keyword id="KW-0328">Glycosyltransferase</keyword>
<keyword id="KW-0333">Golgi apparatus</keyword>
<keyword id="KW-0472">Membrane</keyword>
<keyword id="KW-1185">Reference proteome</keyword>
<keyword id="KW-0735">Signal-anchor</keyword>
<keyword id="KW-0808">Transferase</keyword>
<keyword id="KW-0812">Transmembrane</keyword>
<keyword id="KW-1133">Transmembrane helix</keyword>
<reference key="1">
    <citation type="journal article" date="2002" name="Nature">
        <title>The genome sequence of Schizosaccharomyces pombe.</title>
        <authorList>
            <person name="Wood V."/>
            <person name="Gwilliam R."/>
            <person name="Rajandream M.A."/>
            <person name="Lyne M.H."/>
            <person name="Lyne R."/>
            <person name="Stewart A."/>
            <person name="Sgouros J.G."/>
            <person name="Peat N."/>
            <person name="Hayles J."/>
            <person name="Baker S.G."/>
            <person name="Basham D."/>
            <person name="Bowman S."/>
            <person name="Brooks K."/>
            <person name="Brown D."/>
            <person name="Brown S."/>
            <person name="Chillingworth T."/>
            <person name="Churcher C.M."/>
            <person name="Collins M."/>
            <person name="Connor R."/>
            <person name="Cronin A."/>
            <person name="Davis P."/>
            <person name="Feltwell T."/>
            <person name="Fraser A."/>
            <person name="Gentles S."/>
            <person name="Goble A."/>
            <person name="Hamlin N."/>
            <person name="Harris D.E."/>
            <person name="Hidalgo J."/>
            <person name="Hodgson G."/>
            <person name="Holroyd S."/>
            <person name="Hornsby T."/>
            <person name="Howarth S."/>
            <person name="Huckle E.J."/>
            <person name="Hunt S."/>
            <person name="Jagels K."/>
            <person name="James K.D."/>
            <person name="Jones L."/>
            <person name="Jones M."/>
            <person name="Leather S."/>
            <person name="McDonald S."/>
            <person name="McLean J."/>
            <person name="Mooney P."/>
            <person name="Moule S."/>
            <person name="Mungall K.L."/>
            <person name="Murphy L.D."/>
            <person name="Niblett D."/>
            <person name="Odell C."/>
            <person name="Oliver K."/>
            <person name="O'Neil S."/>
            <person name="Pearson D."/>
            <person name="Quail M.A."/>
            <person name="Rabbinowitsch E."/>
            <person name="Rutherford K.M."/>
            <person name="Rutter S."/>
            <person name="Saunders D."/>
            <person name="Seeger K."/>
            <person name="Sharp S."/>
            <person name="Skelton J."/>
            <person name="Simmonds M.N."/>
            <person name="Squares R."/>
            <person name="Squares S."/>
            <person name="Stevens K."/>
            <person name="Taylor K."/>
            <person name="Taylor R.G."/>
            <person name="Tivey A."/>
            <person name="Walsh S.V."/>
            <person name="Warren T."/>
            <person name="Whitehead S."/>
            <person name="Woodward J.R."/>
            <person name="Volckaert G."/>
            <person name="Aert R."/>
            <person name="Robben J."/>
            <person name="Grymonprez B."/>
            <person name="Weltjens I."/>
            <person name="Vanstreels E."/>
            <person name="Rieger M."/>
            <person name="Schaefer M."/>
            <person name="Mueller-Auer S."/>
            <person name="Gabel C."/>
            <person name="Fuchs M."/>
            <person name="Duesterhoeft A."/>
            <person name="Fritzc C."/>
            <person name="Holzer E."/>
            <person name="Moestl D."/>
            <person name="Hilbert H."/>
            <person name="Borzym K."/>
            <person name="Langer I."/>
            <person name="Beck A."/>
            <person name="Lehrach H."/>
            <person name="Reinhardt R."/>
            <person name="Pohl T.M."/>
            <person name="Eger P."/>
            <person name="Zimmermann W."/>
            <person name="Wedler H."/>
            <person name="Wambutt R."/>
            <person name="Purnelle B."/>
            <person name="Goffeau A."/>
            <person name="Cadieu E."/>
            <person name="Dreano S."/>
            <person name="Gloux S."/>
            <person name="Lelaure V."/>
            <person name="Mottier S."/>
            <person name="Galibert F."/>
            <person name="Aves S.J."/>
            <person name="Xiang Z."/>
            <person name="Hunt C."/>
            <person name="Moore K."/>
            <person name="Hurst S.M."/>
            <person name="Lucas M."/>
            <person name="Rochet M."/>
            <person name="Gaillardin C."/>
            <person name="Tallada V.A."/>
            <person name="Garzon A."/>
            <person name="Thode G."/>
            <person name="Daga R.R."/>
            <person name="Cruzado L."/>
            <person name="Jimenez J."/>
            <person name="Sanchez M."/>
            <person name="del Rey F."/>
            <person name="Benito J."/>
            <person name="Dominguez A."/>
            <person name="Revuelta J.L."/>
            <person name="Moreno S."/>
            <person name="Armstrong J."/>
            <person name="Forsburg S.L."/>
            <person name="Cerutti L."/>
            <person name="Lowe T."/>
            <person name="McCombie W.R."/>
            <person name="Paulsen I."/>
            <person name="Potashkin J."/>
            <person name="Shpakovski G.V."/>
            <person name="Ussery D."/>
            <person name="Barrell B.G."/>
            <person name="Nurse P."/>
        </authorList>
    </citation>
    <scope>NUCLEOTIDE SEQUENCE [LARGE SCALE GENOMIC DNA]</scope>
    <source>
        <strain>972 / ATCC 24843</strain>
    </source>
</reference>
<reference key="2">
    <citation type="journal article" date="2006" name="Nat. Biotechnol.">
        <title>ORFeome cloning and global analysis of protein localization in the fission yeast Schizosaccharomyces pombe.</title>
        <authorList>
            <person name="Matsuyama A."/>
            <person name="Arai R."/>
            <person name="Yashiroda Y."/>
            <person name="Shirai A."/>
            <person name="Kamata A."/>
            <person name="Sekido S."/>
            <person name="Kobayashi Y."/>
            <person name="Hashimoto A."/>
            <person name="Hamamoto M."/>
            <person name="Hiraoka Y."/>
            <person name="Horinouchi S."/>
            <person name="Yoshida M."/>
        </authorList>
    </citation>
    <scope>SUBCELLULAR LOCATION [LARGE SCALE ANALYSIS]</scope>
</reference>
<reference key="3">
    <citation type="journal article" date="2009" name="FEMS Yeast Res.">
        <title>Identification and characterization of a gene required for alpha1,2-mannose extension in the O-linked glycan synthesis pathway in Schizosaccharomyces pombe.</title>
        <authorList>
            <person name="Ikeda Y."/>
            <person name="Ohashi T."/>
            <person name="Tanaka N."/>
            <person name="Takegawa K."/>
        </authorList>
    </citation>
    <scope>IDENTIFICATION</scope>
</reference>
<accession>O74546</accession>
<evidence type="ECO:0000250" key="1"/>
<evidence type="ECO:0000255" key="2"/>
<evidence type="ECO:0000269" key="3">
    <source>
    </source>
</evidence>
<evidence type="ECO:0000305" key="4"/>
<organism>
    <name type="scientific">Schizosaccharomyces pombe (strain 972 / ATCC 24843)</name>
    <name type="common">Fission yeast</name>
    <dbReference type="NCBI Taxonomy" id="284812"/>
    <lineage>
        <taxon>Eukaryota</taxon>
        <taxon>Fungi</taxon>
        <taxon>Dikarya</taxon>
        <taxon>Ascomycota</taxon>
        <taxon>Taphrinomycotina</taxon>
        <taxon>Schizosaccharomycetes</taxon>
        <taxon>Schizosaccharomycetales</taxon>
        <taxon>Schizosaccharomycetaceae</taxon>
        <taxon>Schizosaccharomyces</taxon>
    </lineage>
</organism>